<dbReference type="EC" id="2.5.1.145" evidence="1"/>
<dbReference type="EMBL" id="CP000253">
    <property type="protein sequence ID" value="ABD29911.1"/>
    <property type="molecule type" value="Genomic_DNA"/>
</dbReference>
<dbReference type="RefSeq" id="WP_000513308.1">
    <property type="nucleotide sequence ID" value="NZ_LS483365.1"/>
</dbReference>
<dbReference type="RefSeq" id="YP_499339.1">
    <property type="nucleotide sequence ID" value="NC_007795.1"/>
</dbReference>
<dbReference type="SMR" id="Q2G044"/>
<dbReference type="STRING" id="93061.SAOUHSC_00782"/>
<dbReference type="PaxDb" id="1280-SAXN108_0828"/>
<dbReference type="GeneID" id="3919072"/>
<dbReference type="KEGG" id="sao:SAOUHSC_00782"/>
<dbReference type="PATRIC" id="fig|93061.5.peg.703"/>
<dbReference type="eggNOG" id="COG0682">
    <property type="taxonomic scope" value="Bacteria"/>
</dbReference>
<dbReference type="HOGENOM" id="CLU_013386_0_1_9"/>
<dbReference type="OrthoDB" id="871140at2"/>
<dbReference type="UniPathway" id="UPA00664"/>
<dbReference type="Proteomes" id="UP000008816">
    <property type="component" value="Chromosome"/>
</dbReference>
<dbReference type="GO" id="GO:0005886">
    <property type="term" value="C:plasma membrane"/>
    <property type="evidence" value="ECO:0000318"/>
    <property type="project" value="GO_Central"/>
</dbReference>
<dbReference type="GO" id="GO:0008961">
    <property type="term" value="F:phosphatidylglycerol-prolipoprotein diacylglyceryl transferase activity"/>
    <property type="evidence" value="ECO:0000318"/>
    <property type="project" value="GO_Central"/>
</dbReference>
<dbReference type="GO" id="GO:0042158">
    <property type="term" value="P:lipoprotein biosynthetic process"/>
    <property type="evidence" value="ECO:0000318"/>
    <property type="project" value="GO_Central"/>
</dbReference>
<dbReference type="HAMAP" id="MF_01147">
    <property type="entry name" value="Lgt"/>
    <property type="match status" value="1"/>
</dbReference>
<dbReference type="InterPro" id="IPR001640">
    <property type="entry name" value="Lgt"/>
</dbReference>
<dbReference type="NCBIfam" id="TIGR00544">
    <property type="entry name" value="lgt"/>
    <property type="match status" value="1"/>
</dbReference>
<dbReference type="PANTHER" id="PTHR30589:SF0">
    <property type="entry name" value="PHOSPHATIDYLGLYCEROL--PROLIPOPROTEIN DIACYLGLYCERYL TRANSFERASE"/>
    <property type="match status" value="1"/>
</dbReference>
<dbReference type="PANTHER" id="PTHR30589">
    <property type="entry name" value="PROLIPOPROTEIN DIACYLGLYCERYL TRANSFERASE"/>
    <property type="match status" value="1"/>
</dbReference>
<dbReference type="Pfam" id="PF01790">
    <property type="entry name" value="LGT"/>
    <property type="match status" value="1"/>
</dbReference>
<dbReference type="PROSITE" id="PS01311">
    <property type="entry name" value="LGT"/>
    <property type="match status" value="1"/>
</dbReference>
<comment type="function">
    <text>Transfers the N-acyl diglyceride group on what will become the N-terminal cysteine of membrane lipoproteins.</text>
</comment>
<comment type="function">
    <text evidence="1">Catalyzes the transfer of the diacylglyceryl group from phosphatidylglycerol to the sulfhydryl group of the N-terminal cysteine of a prolipoprotein, the first step in the formation of mature lipoproteins.</text>
</comment>
<comment type="catalytic activity">
    <reaction evidence="1">
        <text>L-cysteinyl-[prolipoprotein] + a 1,2-diacyl-sn-glycero-3-phospho-(1'-sn-glycerol) = an S-1,2-diacyl-sn-glyceryl-L-cysteinyl-[prolipoprotein] + sn-glycerol 1-phosphate + H(+)</text>
        <dbReference type="Rhea" id="RHEA:56712"/>
        <dbReference type="Rhea" id="RHEA-COMP:14679"/>
        <dbReference type="Rhea" id="RHEA-COMP:14680"/>
        <dbReference type="ChEBI" id="CHEBI:15378"/>
        <dbReference type="ChEBI" id="CHEBI:29950"/>
        <dbReference type="ChEBI" id="CHEBI:57685"/>
        <dbReference type="ChEBI" id="CHEBI:64716"/>
        <dbReference type="ChEBI" id="CHEBI:140658"/>
        <dbReference type="EC" id="2.5.1.145"/>
    </reaction>
</comment>
<comment type="pathway">
    <text evidence="1">Protein modification; lipoprotein biosynthesis (diacylglyceryl transfer).</text>
</comment>
<comment type="subcellular location">
    <subcellularLocation>
        <location evidence="1">Cell membrane</location>
        <topology evidence="1">Multi-pass membrane protein</topology>
    </subcellularLocation>
</comment>
<comment type="similarity">
    <text evidence="1">Belongs to the Lgt family.</text>
</comment>
<proteinExistence type="inferred from homology"/>
<organism>
    <name type="scientific">Staphylococcus aureus (strain NCTC 8325 / PS 47)</name>
    <dbReference type="NCBI Taxonomy" id="93061"/>
    <lineage>
        <taxon>Bacteria</taxon>
        <taxon>Bacillati</taxon>
        <taxon>Bacillota</taxon>
        <taxon>Bacilli</taxon>
        <taxon>Bacillales</taxon>
        <taxon>Staphylococcaceae</taxon>
        <taxon>Staphylococcus</taxon>
    </lineage>
</organism>
<accession>Q2G044</accession>
<feature type="chain" id="PRO_0000289882" description="Phosphatidylglycerol--prolipoprotein diacylglyceryl transferase">
    <location>
        <begin position="1"/>
        <end position="279"/>
    </location>
</feature>
<feature type="transmembrane region" description="Helical" evidence="1">
    <location>
        <begin position="18"/>
        <end position="38"/>
    </location>
</feature>
<feature type="transmembrane region" description="Helical" evidence="1">
    <location>
        <begin position="55"/>
        <end position="75"/>
    </location>
</feature>
<feature type="transmembrane region" description="Helical" evidence="1">
    <location>
        <begin position="89"/>
        <end position="109"/>
    </location>
</feature>
<feature type="transmembrane region" description="Helical" evidence="1">
    <location>
        <begin position="203"/>
        <end position="223"/>
    </location>
</feature>
<feature type="transmembrane region" description="Helical" evidence="1">
    <location>
        <begin position="235"/>
        <end position="255"/>
    </location>
</feature>
<feature type="binding site" evidence="1">
    <location>
        <position position="137"/>
    </location>
    <ligand>
        <name>a 1,2-diacyl-sn-glycero-3-phospho-(1'-sn-glycerol)</name>
        <dbReference type="ChEBI" id="CHEBI:64716"/>
    </ligand>
</feature>
<keyword id="KW-1003">Cell membrane</keyword>
<keyword id="KW-0472">Membrane</keyword>
<keyword id="KW-1185">Reference proteome</keyword>
<keyword id="KW-0808">Transferase</keyword>
<keyword id="KW-0812">Transmembrane</keyword>
<keyword id="KW-1133">Transmembrane helix</keyword>
<gene>
    <name evidence="1" type="primary">lgt</name>
    <name type="ordered locus">SAOUHSC_00782</name>
</gene>
<name>LGT_STAA8</name>
<sequence length="279" mass="31572">MGIVFNYIDPVAFNLGPLSVRWYGIIIAVGILLGYFVAQRALVKAGLHKDTLVDIIFYSALFGFIAARIYFVIFQWPYYAENPSEIIKIWHGGIAIHGGLIGGFIAGVIVCKVKNLNPFQIGDIVAPSIILAQGIGRWGNFMNHEAHGGSVSRAFLEQLHLPNFIIENMYINGQYYHPTFLYESIWDVAGFIILVNIRKHLKLGETFFLYLTWYSIGRFFIEGLRTDSLMLTSNIRVAQLVSILLILISISLIVYRRIKYNPPLYSKVGALPWPTKKVK</sequence>
<reference key="1">
    <citation type="book" date="2006" name="Gram positive pathogens, 2nd edition">
        <title>The Staphylococcus aureus NCTC 8325 genome.</title>
        <editorList>
            <person name="Fischetti V."/>
            <person name="Novick R."/>
            <person name="Ferretti J."/>
            <person name="Portnoy D."/>
            <person name="Rood J."/>
        </editorList>
        <authorList>
            <person name="Gillaspy A.F."/>
            <person name="Worrell V."/>
            <person name="Orvis J."/>
            <person name="Roe B.A."/>
            <person name="Dyer D.W."/>
            <person name="Iandolo J.J."/>
        </authorList>
    </citation>
    <scope>NUCLEOTIDE SEQUENCE [LARGE SCALE GENOMIC DNA]</scope>
    <source>
        <strain>NCTC 8325 / PS 47</strain>
    </source>
</reference>
<reference key="2">
    <citation type="journal article" date="2005" name="Infect. Immun.">
        <title>Staphylococcus aureus deficient in lipidation of prelipoproteins is attenuated in growth and immune activation.</title>
        <authorList>
            <person name="Stoll H."/>
            <person name="Dengjel J."/>
            <person name="Nerz C."/>
            <person name="Goetz F."/>
        </authorList>
    </citation>
    <scope>EFFECT ON GROWTH AND HOST IMMUNE ACTIVATION</scope>
</reference>
<protein>
    <recommendedName>
        <fullName evidence="1">Phosphatidylglycerol--prolipoprotein diacylglyceryl transferase</fullName>
        <ecNumber evidence="1">2.5.1.145</ecNumber>
    </recommendedName>
</protein>
<evidence type="ECO:0000255" key="1">
    <source>
        <dbReference type="HAMAP-Rule" id="MF_01147"/>
    </source>
</evidence>